<organism>
    <name type="scientific">Bungarus multicinctus</name>
    <name type="common">Many-banded krait</name>
    <dbReference type="NCBI Taxonomy" id="8616"/>
    <lineage>
        <taxon>Eukaryota</taxon>
        <taxon>Metazoa</taxon>
        <taxon>Chordata</taxon>
        <taxon>Craniata</taxon>
        <taxon>Vertebrata</taxon>
        <taxon>Euteleostomi</taxon>
        <taxon>Lepidosauria</taxon>
        <taxon>Squamata</taxon>
        <taxon>Bifurcata</taxon>
        <taxon>Unidentata</taxon>
        <taxon>Episquamata</taxon>
        <taxon>Toxicofera</taxon>
        <taxon>Serpentes</taxon>
        <taxon>Colubroidea</taxon>
        <taxon>Elapidae</taxon>
        <taxon>Bungarinae</taxon>
        <taxon>Bungarus</taxon>
    </lineage>
</organism>
<proteinExistence type="inferred from homology"/>
<evidence type="ECO:0000250" key="1"/>
<evidence type="ECO:0000250" key="2">
    <source>
        <dbReference type="UniProtKB" id="P60301"/>
    </source>
</evidence>
<evidence type="ECO:0000305" key="3"/>
<comment type="subcellular location">
    <subcellularLocation>
        <location evidence="1">Secreted</location>
    </subcellularLocation>
</comment>
<comment type="tissue specificity">
    <text evidence="3">Expressed by the venom gland.</text>
</comment>
<comment type="similarity">
    <text evidence="3">Belongs to the three-finger toxin family. Short-chain subfamily. Orphan group IX sub-subfamily.</text>
</comment>
<keyword id="KW-1015">Disulfide bond</keyword>
<keyword id="KW-0964">Secreted</keyword>
<keyword id="KW-0732">Signal</keyword>
<keyword id="KW-0800">Toxin</keyword>
<sequence>MKTLLLTLVVLTIACLDLGYTKTCFNDDLTNPKTTELCRHSVYFCFKNSRIAGGVERMQRGCSLTCPDIKYNGKYIYCCTRDNCNA</sequence>
<protein>
    <recommendedName>
        <fullName>Cardiotoxin homolog TA-ctx-like</fullName>
    </recommendedName>
</protein>
<accession>P79688</accession>
<dbReference type="EMBL" id="Y10870">
    <property type="protein sequence ID" value="CAA71820.1"/>
    <property type="molecule type" value="mRNA"/>
</dbReference>
<dbReference type="SMR" id="P79688"/>
<dbReference type="GO" id="GO:0005576">
    <property type="term" value="C:extracellular region"/>
    <property type="evidence" value="ECO:0007669"/>
    <property type="project" value="UniProtKB-SubCell"/>
</dbReference>
<dbReference type="GO" id="GO:0090729">
    <property type="term" value="F:toxin activity"/>
    <property type="evidence" value="ECO:0007669"/>
    <property type="project" value="UniProtKB-KW"/>
</dbReference>
<dbReference type="CDD" id="cd00206">
    <property type="entry name" value="TFP_snake_toxin"/>
    <property type="match status" value="1"/>
</dbReference>
<dbReference type="Gene3D" id="2.10.60.10">
    <property type="entry name" value="CD59"/>
    <property type="match status" value="1"/>
</dbReference>
<dbReference type="InterPro" id="IPR003571">
    <property type="entry name" value="Snake_3FTx"/>
</dbReference>
<dbReference type="InterPro" id="IPR045860">
    <property type="entry name" value="Snake_toxin-like_sf"/>
</dbReference>
<dbReference type="InterPro" id="IPR018354">
    <property type="entry name" value="Snake_toxin_con_site"/>
</dbReference>
<dbReference type="InterPro" id="IPR054131">
    <property type="entry name" value="Toxin_cobra-type"/>
</dbReference>
<dbReference type="Pfam" id="PF21947">
    <property type="entry name" value="Toxin_cobra-type"/>
    <property type="match status" value="1"/>
</dbReference>
<dbReference type="SUPFAM" id="SSF57302">
    <property type="entry name" value="Snake toxin-like"/>
    <property type="match status" value="1"/>
</dbReference>
<dbReference type="PROSITE" id="PS00272">
    <property type="entry name" value="SNAKE_TOXIN"/>
    <property type="match status" value="1"/>
</dbReference>
<name>3SO9L_BUNMU</name>
<feature type="signal peptide" evidence="1">
    <location>
        <begin position="1"/>
        <end position="21"/>
    </location>
</feature>
<feature type="chain" id="PRO_0000035420" description="Cardiotoxin homolog TA-ctx-like">
    <location>
        <begin position="22"/>
        <end position="86"/>
    </location>
</feature>
<feature type="disulfide bond" evidence="2">
    <location>
        <begin position="24"/>
        <end position="45"/>
    </location>
</feature>
<feature type="disulfide bond" evidence="2">
    <location>
        <begin position="38"/>
        <end position="62"/>
    </location>
</feature>
<feature type="disulfide bond" evidence="2">
    <location>
        <begin position="66"/>
        <end position="78"/>
    </location>
</feature>
<feature type="disulfide bond" evidence="2">
    <location>
        <begin position="79"/>
        <end position="84"/>
    </location>
</feature>
<reference key="1">
    <citation type="journal article" date="1996" name="Biochem. Mol. Biol. Int.">
        <title>cDNA sequence analysis of a novel cardiotoxin-like protein from Taiwan banded krait.</title>
        <authorList>
            <person name="Chang L.-S."/>
            <person name="Lin J."/>
        </authorList>
    </citation>
    <scope>NUCLEOTIDE SEQUENCE [MRNA]</scope>
    <source>
        <tissue>Venom gland</tissue>
    </source>
</reference>